<evidence type="ECO:0000255" key="1">
    <source>
        <dbReference type="HAMAP-Rule" id="MF_00218"/>
    </source>
</evidence>
<name>DCUP_SYNSC</name>
<sequence>MSDSLPLLLRAARGESVERPPVWMMRQAGRYMKIYRDLRDKYPSFRERSENPDLSYEISMQPFHAFKPDGVILFSDILTPLPGMGIDFDIIESKGPQIGDPIRSMAQVDALRPLNPSESMPFVGEVLGRLRQSVGNEAAVLGFVGAPWTLAAYVVEGKSSKNYAVIKAMVFREPEILHKLLDHFAESIANYLRYQIDSGAQVVQMFDSWAGQLSPADYDTFAAPYQKKVVDLVKKTHPDTPFILYISGSAGVIERMANTGVDIVSLDWTVDMAEALARLPEHIGVQGNVDPGLLFGTPEAIEARIDDCVRKARGRKHILNLGHGILPGTPEENGEAFFRAGKSVMDRLGAVV</sequence>
<accession>Q3AKV7</accession>
<keyword id="KW-0963">Cytoplasm</keyword>
<keyword id="KW-0210">Decarboxylase</keyword>
<keyword id="KW-0456">Lyase</keyword>
<keyword id="KW-0627">Porphyrin biosynthesis</keyword>
<gene>
    <name evidence="1" type="primary">hemE</name>
    <name type="ordered locus">Syncc9605_1017</name>
</gene>
<feature type="chain" id="PRO_1000023993" description="Uroporphyrinogen decarboxylase">
    <location>
        <begin position="1"/>
        <end position="352"/>
    </location>
</feature>
<feature type="binding site" evidence="1">
    <location>
        <begin position="26"/>
        <end position="30"/>
    </location>
    <ligand>
        <name>substrate</name>
    </ligand>
</feature>
<feature type="binding site" evidence="1">
    <location>
        <position position="76"/>
    </location>
    <ligand>
        <name>substrate</name>
    </ligand>
</feature>
<feature type="binding site" evidence="1">
    <location>
        <position position="153"/>
    </location>
    <ligand>
        <name>substrate</name>
    </ligand>
</feature>
<feature type="binding site" evidence="1">
    <location>
        <position position="208"/>
    </location>
    <ligand>
        <name>substrate</name>
    </ligand>
</feature>
<feature type="binding site" evidence="1">
    <location>
        <position position="323"/>
    </location>
    <ligand>
        <name>substrate</name>
    </ligand>
</feature>
<feature type="site" description="Transition state stabilizer" evidence="1">
    <location>
        <position position="76"/>
    </location>
</feature>
<dbReference type="EC" id="4.1.1.37" evidence="1"/>
<dbReference type="EMBL" id="CP000110">
    <property type="protein sequence ID" value="ABB34775.1"/>
    <property type="molecule type" value="Genomic_DNA"/>
</dbReference>
<dbReference type="RefSeq" id="WP_011363999.1">
    <property type="nucleotide sequence ID" value="NC_007516.1"/>
</dbReference>
<dbReference type="SMR" id="Q3AKV7"/>
<dbReference type="STRING" id="110662.Syncc9605_1017"/>
<dbReference type="KEGG" id="syd:Syncc9605_1017"/>
<dbReference type="eggNOG" id="COG0407">
    <property type="taxonomic scope" value="Bacteria"/>
</dbReference>
<dbReference type="HOGENOM" id="CLU_040933_0_2_3"/>
<dbReference type="OrthoDB" id="9806656at2"/>
<dbReference type="UniPathway" id="UPA00251">
    <property type="reaction ID" value="UER00321"/>
</dbReference>
<dbReference type="GO" id="GO:0005737">
    <property type="term" value="C:cytoplasm"/>
    <property type="evidence" value="ECO:0007669"/>
    <property type="project" value="UniProtKB-SubCell"/>
</dbReference>
<dbReference type="GO" id="GO:0004853">
    <property type="term" value="F:uroporphyrinogen decarboxylase activity"/>
    <property type="evidence" value="ECO:0007669"/>
    <property type="project" value="UniProtKB-UniRule"/>
</dbReference>
<dbReference type="GO" id="GO:0006782">
    <property type="term" value="P:protoporphyrinogen IX biosynthetic process"/>
    <property type="evidence" value="ECO:0007669"/>
    <property type="project" value="UniProtKB-UniRule"/>
</dbReference>
<dbReference type="CDD" id="cd00717">
    <property type="entry name" value="URO-D"/>
    <property type="match status" value="1"/>
</dbReference>
<dbReference type="FunFam" id="3.20.20.210:FF:000006">
    <property type="entry name" value="Uroporphyrinogen decarboxylase"/>
    <property type="match status" value="1"/>
</dbReference>
<dbReference type="Gene3D" id="3.20.20.210">
    <property type="match status" value="1"/>
</dbReference>
<dbReference type="HAMAP" id="MF_00218">
    <property type="entry name" value="URO_D"/>
    <property type="match status" value="1"/>
</dbReference>
<dbReference type="InterPro" id="IPR038071">
    <property type="entry name" value="UROD/MetE-like_sf"/>
</dbReference>
<dbReference type="InterPro" id="IPR006361">
    <property type="entry name" value="Uroporphyrinogen_deCO2ase_HemE"/>
</dbReference>
<dbReference type="InterPro" id="IPR000257">
    <property type="entry name" value="Uroporphyrinogen_deCOase"/>
</dbReference>
<dbReference type="NCBIfam" id="TIGR01464">
    <property type="entry name" value="hemE"/>
    <property type="match status" value="1"/>
</dbReference>
<dbReference type="PANTHER" id="PTHR21091">
    <property type="entry name" value="METHYLTETRAHYDROFOLATE:HOMOCYSTEINE METHYLTRANSFERASE RELATED"/>
    <property type="match status" value="1"/>
</dbReference>
<dbReference type="PANTHER" id="PTHR21091:SF169">
    <property type="entry name" value="UROPORPHYRINOGEN DECARBOXYLASE"/>
    <property type="match status" value="1"/>
</dbReference>
<dbReference type="Pfam" id="PF01208">
    <property type="entry name" value="URO-D"/>
    <property type="match status" value="1"/>
</dbReference>
<dbReference type="SUPFAM" id="SSF51726">
    <property type="entry name" value="UROD/MetE-like"/>
    <property type="match status" value="1"/>
</dbReference>
<dbReference type="PROSITE" id="PS00906">
    <property type="entry name" value="UROD_1"/>
    <property type="match status" value="1"/>
</dbReference>
<dbReference type="PROSITE" id="PS00907">
    <property type="entry name" value="UROD_2"/>
    <property type="match status" value="1"/>
</dbReference>
<protein>
    <recommendedName>
        <fullName evidence="1">Uroporphyrinogen decarboxylase</fullName>
        <shortName evidence="1">UPD</shortName>
        <shortName evidence="1">URO-D</shortName>
        <ecNumber evidence="1">4.1.1.37</ecNumber>
    </recommendedName>
</protein>
<organism>
    <name type="scientific">Synechococcus sp. (strain CC9605)</name>
    <dbReference type="NCBI Taxonomy" id="110662"/>
    <lineage>
        <taxon>Bacteria</taxon>
        <taxon>Bacillati</taxon>
        <taxon>Cyanobacteriota</taxon>
        <taxon>Cyanophyceae</taxon>
        <taxon>Synechococcales</taxon>
        <taxon>Synechococcaceae</taxon>
        <taxon>Synechococcus</taxon>
    </lineage>
</organism>
<proteinExistence type="inferred from homology"/>
<comment type="function">
    <text evidence="1">Catalyzes the decarboxylation of four acetate groups of uroporphyrinogen-III to yield coproporphyrinogen-III.</text>
</comment>
<comment type="catalytic activity">
    <reaction evidence="1">
        <text>uroporphyrinogen III + 4 H(+) = coproporphyrinogen III + 4 CO2</text>
        <dbReference type="Rhea" id="RHEA:19865"/>
        <dbReference type="ChEBI" id="CHEBI:15378"/>
        <dbReference type="ChEBI" id="CHEBI:16526"/>
        <dbReference type="ChEBI" id="CHEBI:57308"/>
        <dbReference type="ChEBI" id="CHEBI:57309"/>
        <dbReference type="EC" id="4.1.1.37"/>
    </reaction>
</comment>
<comment type="pathway">
    <text evidence="1">Porphyrin-containing compound metabolism; protoporphyrin-IX biosynthesis; coproporphyrinogen-III from 5-aminolevulinate: step 4/4.</text>
</comment>
<comment type="subunit">
    <text evidence="1">Homodimer.</text>
</comment>
<comment type="subcellular location">
    <subcellularLocation>
        <location evidence="1">Cytoplasm</location>
    </subcellularLocation>
</comment>
<comment type="similarity">
    <text evidence="1">Belongs to the uroporphyrinogen decarboxylase family.</text>
</comment>
<reference key="1">
    <citation type="submission" date="2005-07" db="EMBL/GenBank/DDBJ databases">
        <title>Complete sequence of Synechococcus sp. CC9605.</title>
        <authorList>
            <consortium name="US DOE Joint Genome Institute"/>
            <person name="Copeland A."/>
            <person name="Lucas S."/>
            <person name="Lapidus A."/>
            <person name="Barry K."/>
            <person name="Detter J.C."/>
            <person name="Glavina T."/>
            <person name="Hammon N."/>
            <person name="Israni S."/>
            <person name="Pitluck S."/>
            <person name="Schmutz J."/>
            <person name="Martinez M."/>
            <person name="Larimer F."/>
            <person name="Land M."/>
            <person name="Kyrpides N."/>
            <person name="Ivanova N."/>
            <person name="Richardson P."/>
        </authorList>
    </citation>
    <scope>NUCLEOTIDE SEQUENCE [LARGE SCALE GENOMIC DNA]</scope>
    <source>
        <strain>CC9605</strain>
    </source>
</reference>